<comment type="function">
    <text evidence="1">Transfers the 4'-phosphopantetheine moiety from coenzyme A to a Ser of acyl-carrier-protein.</text>
</comment>
<comment type="catalytic activity">
    <reaction evidence="1">
        <text>apo-[ACP] + CoA = holo-[ACP] + adenosine 3',5'-bisphosphate + H(+)</text>
        <dbReference type="Rhea" id="RHEA:12068"/>
        <dbReference type="Rhea" id="RHEA-COMP:9685"/>
        <dbReference type="Rhea" id="RHEA-COMP:9690"/>
        <dbReference type="ChEBI" id="CHEBI:15378"/>
        <dbReference type="ChEBI" id="CHEBI:29999"/>
        <dbReference type="ChEBI" id="CHEBI:57287"/>
        <dbReference type="ChEBI" id="CHEBI:58343"/>
        <dbReference type="ChEBI" id="CHEBI:64479"/>
        <dbReference type="EC" id="2.7.8.7"/>
    </reaction>
</comment>
<comment type="cofactor">
    <cofactor evidence="1">
        <name>Mg(2+)</name>
        <dbReference type="ChEBI" id="CHEBI:18420"/>
    </cofactor>
</comment>
<comment type="subcellular location">
    <subcellularLocation>
        <location evidence="1">Cytoplasm</location>
    </subcellularLocation>
</comment>
<comment type="similarity">
    <text evidence="1">Belongs to the P-Pant transferase superfamily. AcpS family.</text>
</comment>
<sequence length="124" mass="13371">MIIGLGIDITELDRIKRSLDKYGERFAEKILTPAEIELIPAKNPVPYVAARFAAKEAAVKALGTGFAEGITFHTIEITRLDSGAPQLNFLGKALERSKSMGVEGIHISITHGRDTAAAVVVLEK</sequence>
<gene>
    <name evidence="1" type="primary">acpS</name>
    <name type="ordered locus">Desal_1993</name>
</gene>
<name>ACPS_MARSD</name>
<keyword id="KW-0963">Cytoplasm</keyword>
<keyword id="KW-0275">Fatty acid biosynthesis</keyword>
<keyword id="KW-0276">Fatty acid metabolism</keyword>
<keyword id="KW-0444">Lipid biosynthesis</keyword>
<keyword id="KW-0443">Lipid metabolism</keyword>
<keyword id="KW-0460">Magnesium</keyword>
<keyword id="KW-0479">Metal-binding</keyword>
<keyword id="KW-1185">Reference proteome</keyword>
<keyword id="KW-0808">Transferase</keyword>
<reference key="1">
    <citation type="submission" date="2009-06" db="EMBL/GenBank/DDBJ databases">
        <title>Complete sequence of Desulfovibrio salexigens DSM 2638.</title>
        <authorList>
            <consortium name="US DOE Joint Genome Institute"/>
            <person name="Lucas S."/>
            <person name="Copeland A."/>
            <person name="Lapidus A."/>
            <person name="Glavina del Rio T."/>
            <person name="Tice H."/>
            <person name="Bruce D."/>
            <person name="Goodwin L."/>
            <person name="Pitluck S."/>
            <person name="Munk A.C."/>
            <person name="Brettin T."/>
            <person name="Detter J.C."/>
            <person name="Han C."/>
            <person name="Tapia R."/>
            <person name="Larimer F."/>
            <person name="Land M."/>
            <person name="Hauser L."/>
            <person name="Kyrpides N."/>
            <person name="Anderson I."/>
            <person name="Wall J.D."/>
            <person name="Arkin A.P."/>
            <person name="Dehal P."/>
            <person name="Chivian D."/>
            <person name="Giles B."/>
            <person name="Hazen T.C."/>
        </authorList>
    </citation>
    <scope>NUCLEOTIDE SEQUENCE [LARGE SCALE GENOMIC DNA]</scope>
    <source>
        <strain>ATCC 14822 / DSM 2638 / NCIMB 8403 / VKM B-1763</strain>
    </source>
</reference>
<proteinExistence type="inferred from homology"/>
<feature type="chain" id="PRO_1000202791" description="Holo-[acyl-carrier-protein] synthase">
    <location>
        <begin position="1"/>
        <end position="124"/>
    </location>
</feature>
<feature type="binding site" evidence="1">
    <location>
        <position position="8"/>
    </location>
    <ligand>
        <name>Mg(2+)</name>
        <dbReference type="ChEBI" id="CHEBI:18420"/>
    </ligand>
</feature>
<feature type="binding site" evidence="1">
    <location>
        <position position="56"/>
    </location>
    <ligand>
        <name>Mg(2+)</name>
        <dbReference type="ChEBI" id="CHEBI:18420"/>
    </ligand>
</feature>
<dbReference type="EC" id="2.7.8.7" evidence="1"/>
<dbReference type="EMBL" id="CP001649">
    <property type="protein sequence ID" value="ACS80053.1"/>
    <property type="molecule type" value="Genomic_DNA"/>
</dbReference>
<dbReference type="RefSeq" id="WP_015851869.1">
    <property type="nucleotide sequence ID" value="NC_012881.1"/>
</dbReference>
<dbReference type="SMR" id="C6BV78"/>
<dbReference type="STRING" id="526222.Desal_1993"/>
<dbReference type="KEGG" id="dsa:Desal_1993"/>
<dbReference type="eggNOG" id="COG0736">
    <property type="taxonomic scope" value="Bacteria"/>
</dbReference>
<dbReference type="HOGENOM" id="CLU_089696_0_2_7"/>
<dbReference type="OrthoDB" id="517356at2"/>
<dbReference type="Proteomes" id="UP000002601">
    <property type="component" value="Chromosome"/>
</dbReference>
<dbReference type="GO" id="GO:0005737">
    <property type="term" value="C:cytoplasm"/>
    <property type="evidence" value="ECO:0007669"/>
    <property type="project" value="UniProtKB-SubCell"/>
</dbReference>
<dbReference type="GO" id="GO:0008897">
    <property type="term" value="F:holo-[acyl-carrier-protein] synthase activity"/>
    <property type="evidence" value="ECO:0007669"/>
    <property type="project" value="UniProtKB-UniRule"/>
</dbReference>
<dbReference type="GO" id="GO:0000287">
    <property type="term" value="F:magnesium ion binding"/>
    <property type="evidence" value="ECO:0007669"/>
    <property type="project" value="UniProtKB-UniRule"/>
</dbReference>
<dbReference type="GO" id="GO:0006633">
    <property type="term" value="P:fatty acid biosynthetic process"/>
    <property type="evidence" value="ECO:0007669"/>
    <property type="project" value="UniProtKB-UniRule"/>
</dbReference>
<dbReference type="Gene3D" id="3.90.470.20">
    <property type="entry name" value="4'-phosphopantetheinyl transferase domain"/>
    <property type="match status" value="1"/>
</dbReference>
<dbReference type="HAMAP" id="MF_00101">
    <property type="entry name" value="AcpS"/>
    <property type="match status" value="1"/>
</dbReference>
<dbReference type="InterPro" id="IPR008278">
    <property type="entry name" value="4-PPantetheinyl_Trfase_dom"/>
</dbReference>
<dbReference type="InterPro" id="IPR037143">
    <property type="entry name" value="4-PPantetheinyl_Trfase_dom_sf"/>
</dbReference>
<dbReference type="InterPro" id="IPR002582">
    <property type="entry name" value="ACPS"/>
</dbReference>
<dbReference type="InterPro" id="IPR004568">
    <property type="entry name" value="Ppantetheine-prot_Trfase_dom"/>
</dbReference>
<dbReference type="NCBIfam" id="TIGR00516">
    <property type="entry name" value="acpS"/>
    <property type="match status" value="1"/>
</dbReference>
<dbReference type="NCBIfam" id="TIGR00556">
    <property type="entry name" value="pantethn_trn"/>
    <property type="match status" value="1"/>
</dbReference>
<dbReference type="NCBIfam" id="NF011251">
    <property type="entry name" value="PRK14657.1"/>
    <property type="match status" value="1"/>
</dbReference>
<dbReference type="Pfam" id="PF01648">
    <property type="entry name" value="ACPS"/>
    <property type="match status" value="1"/>
</dbReference>
<dbReference type="SUPFAM" id="SSF56214">
    <property type="entry name" value="4'-phosphopantetheinyl transferase"/>
    <property type="match status" value="1"/>
</dbReference>
<evidence type="ECO:0000255" key="1">
    <source>
        <dbReference type="HAMAP-Rule" id="MF_00101"/>
    </source>
</evidence>
<protein>
    <recommendedName>
        <fullName evidence="1">Holo-[acyl-carrier-protein] synthase</fullName>
        <shortName evidence="1">Holo-ACP synthase</shortName>
        <ecNumber evidence="1">2.7.8.7</ecNumber>
    </recommendedName>
    <alternativeName>
        <fullName evidence="1">4'-phosphopantetheinyl transferase AcpS</fullName>
    </alternativeName>
</protein>
<accession>C6BV78</accession>
<organism>
    <name type="scientific">Maridesulfovibrio salexigens (strain ATCC 14822 / DSM 2638 / NCIMB 8403 / VKM B-1763)</name>
    <name type="common">Desulfovibrio salexigens</name>
    <dbReference type="NCBI Taxonomy" id="526222"/>
    <lineage>
        <taxon>Bacteria</taxon>
        <taxon>Pseudomonadati</taxon>
        <taxon>Thermodesulfobacteriota</taxon>
        <taxon>Desulfovibrionia</taxon>
        <taxon>Desulfovibrionales</taxon>
        <taxon>Desulfovibrionaceae</taxon>
        <taxon>Maridesulfovibrio</taxon>
    </lineage>
</organism>